<comment type="function">
    <text>Important for the aerobic growth. Decarboxylates pyruvate in four steps. The energy released is partially stored in acetyl phosphate.</text>
</comment>
<comment type="catalytic activity">
    <reaction>
        <text>pyruvate + phosphate + O2 + H(+) = acetyl phosphate + H2O2 + CO2</text>
        <dbReference type="Rhea" id="RHEA:20848"/>
        <dbReference type="ChEBI" id="CHEBI:15361"/>
        <dbReference type="ChEBI" id="CHEBI:15378"/>
        <dbReference type="ChEBI" id="CHEBI:15379"/>
        <dbReference type="ChEBI" id="CHEBI:16240"/>
        <dbReference type="ChEBI" id="CHEBI:16526"/>
        <dbReference type="ChEBI" id="CHEBI:22191"/>
        <dbReference type="ChEBI" id="CHEBI:43474"/>
        <dbReference type="EC" id="1.2.3.3"/>
    </reaction>
</comment>
<comment type="cofactor">
    <cofactor>
        <name>FAD</name>
        <dbReference type="ChEBI" id="CHEBI:57692"/>
    </cofactor>
    <text>Binds 1 FAD per subunit.</text>
</comment>
<comment type="cofactor">
    <cofactor>
        <name>Mg(2+)</name>
        <dbReference type="ChEBI" id="CHEBI:18420"/>
    </cofactor>
    <text>Binds 1 Mg(2+) ion per subunit.</text>
</comment>
<comment type="cofactor">
    <cofactor>
        <name>thiamine diphosphate</name>
        <dbReference type="ChEBI" id="CHEBI:58937"/>
    </cofactor>
    <text>Binds 1 thiamine pyrophosphate per subunit.</text>
</comment>
<comment type="subunit">
    <text>Homotetramer.</text>
</comment>
<comment type="domain">
    <text>Each monomer is divided into three domains, each of which contains a six-stranded parallel beta sheet surrounded by alpha helices.</text>
</comment>
<comment type="similarity">
    <text evidence="1">Belongs to the TPP enzyme family.</text>
</comment>
<organism>
    <name type="scientific">Lactiplantibacillus plantarum (strain ATCC BAA-793 / NCIMB 8826 / WCFS1)</name>
    <name type="common">Lactobacillus plantarum</name>
    <dbReference type="NCBI Taxonomy" id="220668"/>
    <lineage>
        <taxon>Bacteria</taxon>
        <taxon>Bacillati</taxon>
        <taxon>Bacillota</taxon>
        <taxon>Bacilli</taxon>
        <taxon>Lactobacillales</taxon>
        <taxon>Lactobacillaceae</taxon>
        <taxon>Lactiplantibacillus</taxon>
    </lineage>
</organism>
<feature type="chain" id="PRO_0000090818" description="Pyruvate oxidase">
    <location>
        <begin position="1"/>
        <end position="603"/>
    </location>
</feature>
<feature type="region of interest" description="Core">
    <location>
        <begin position="1"/>
        <end position="191"/>
    </location>
</feature>
<feature type="region of interest" description="FAD-binding">
    <location>
        <begin position="192"/>
        <end position="342"/>
    </location>
</feature>
<feature type="region of interest" description="Thiamine pyrophosphate binding">
    <location>
        <begin position="343"/>
        <end position="603"/>
    </location>
</feature>
<feature type="binding site">
    <location>
        <position position="447"/>
    </location>
    <ligand>
        <name>Mg(2+)</name>
        <dbReference type="ChEBI" id="CHEBI:18420"/>
    </ligand>
</feature>
<feature type="binding site">
    <location>
        <position position="474"/>
    </location>
    <ligand>
        <name>Mg(2+)</name>
        <dbReference type="ChEBI" id="CHEBI:18420"/>
    </ligand>
</feature>
<feature type="binding site">
    <location>
        <position position="476"/>
    </location>
    <ligand>
        <name>Mg(2+)</name>
        <dbReference type="ChEBI" id="CHEBI:18420"/>
    </ligand>
</feature>
<feature type="strand" evidence="4">
    <location>
        <begin position="10"/>
        <end position="12"/>
    </location>
</feature>
<feature type="helix" evidence="4">
    <location>
        <begin position="13"/>
        <end position="23"/>
    </location>
</feature>
<feature type="strand" evidence="4">
    <location>
        <begin position="28"/>
        <end position="31"/>
    </location>
</feature>
<feature type="helix" evidence="4">
    <location>
        <begin position="35"/>
        <end position="37"/>
    </location>
</feature>
<feature type="helix" evidence="4">
    <location>
        <begin position="38"/>
        <end position="46"/>
    </location>
</feature>
<feature type="turn" evidence="4">
    <location>
        <begin position="47"/>
        <end position="50"/>
    </location>
</feature>
<feature type="strand" evidence="4">
    <location>
        <begin position="51"/>
        <end position="55"/>
    </location>
</feature>
<feature type="helix" evidence="4">
    <location>
        <begin position="59"/>
        <end position="73"/>
    </location>
</feature>
<feature type="strand" evidence="4">
    <location>
        <begin position="77"/>
        <end position="81"/>
    </location>
</feature>
<feature type="helix" evidence="4">
    <location>
        <begin position="85"/>
        <end position="88"/>
    </location>
</feature>
<feature type="helix" evidence="4">
    <location>
        <begin position="91"/>
        <end position="99"/>
    </location>
</feature>
<feature type="strand" evidence="4">
    <location>
        <begin position="104"/>
        <end position="110"/>
    </location>
</feature>
<feature type="turn" evidence="4">
    <location>
        <begin position="113"/>
        <end position="117"/>
    </location>
</feature>
<feature type="helix" evidence="4">
    <location>
        <begin position="127"/>
        <end position="130"/>
    </location>
</feature>
<feature type="turn" evidence="4">
    <location>
        <begin position="131"/>
        <end position="133"/>
    </location>
</feature>
<feature type="strand" evidence="4">
    <location>
        <begin position="135"/>
        <end position="139"/>
    </location>
</feature>
<feature type="turn" evidence="3">
    <location>
        <begin position="143"/>
        <end position="145"/>
    </location>
</feature>
<feature type="helix" evidence="4">
    <location>
        <begin position="146"/>
        <end position="160"/>
    </location>
</feature>
<feature type="strand" evidence="4">
    <location>
        <begin position="162"/>
        <end position="169"/>
    </location>
</feature>
<feature type="helix" evidence="4">
    <location>
        <begin position="172"/>
        <end position="174"/>
    </location>
</feature>
<feature type="strand" evidence="4">
    <location>
        <begin position="175"/>
        <end position="178"/>
    </location>
</feature>
<feature type="turn" evidence="4">
    <location>
        <begin position="179"/>
        <end position="181"/>
    </location>
</feature>
<feature type="helix" evidence="4">
    <location>
        <begin position="186"/>
        <end position="188"/>
    </location>
</feature>
<feature type="helix" evidence="4">
    <location>
        <begin position="199"/>
        <end position="211"/>
    </location>
</feature>
<feature type="strand" evidence="4">
    <location>
        <begin position="213"/>
        <end position="219"/>
    </location>
</feature>
<feature type="helix" evidence="4">
    <location>
        <begin position="221"/>
        <end position="223"/>
    </location>
</feature>
<feature type="helix" evidence="4">
    <location>
        <begin position="227"/>
        <end position="237"/>
    </location>
</feature>
<feature type="strand" evidence="4">
    <location>
        <begin position="241"/>
        <end position="243"/>
    </location>
</feature>
<feature type="helix" evidence="4">
    <location>
        <begin position="245"/>
        <end position="247"/>
    </location>
</feature>
<feature type="strand" evidence="3">
    <location>
        <begin position="258"/>
        <end position="261"/>
    </location>
</feature>
<feature type="strand" evidence="4">
    <location>
        <begin position="263"/>
        <end position="266"/>
    </location>
</feature>
<feature type="helix" evidence="4">
    <location>
        <begin position="268"/>
        <end position="276"/>
    </location>
</feature>
<feature type="strand" evidence="4">
    <location>
        <begin position="278"/>
        <end position="284"/>
    </location>
</feature>
<feature type="turn" evidence="4">
    <location>
        <begin position="288"/>
        <end position="298"/>
    </location>
</feature>
<feature type="strand" evidence="4">
    <location>
        <begin position="300"/>
        <end position="307"/>
    </location>
</feature>
<feature type="helix" evidence="4">
    <location>
        <begin position="309"/>
        <end position="311"/>
    </location>
</feature>
<feature type="strand" evidence="4">
    <location>
        <begin position="314"/>
        <end position="316"/>
    </location>
</feature>
<feature type="strand" evidence="4">
    <location>
        <begin position="319"/>
        <end position="324"/>
    </location>
</feature>
<feature type="helix" evidence="4">
    <location>
        <begin position="326"/>
        <end position="335"/>
    </location>
</feature>
<feature type="helix" evidence="4">
    <location>
        <begin position="344"/>
        <end position="364"/>
    </location>
</feature>
<feature type="strand" evidence="4">
    <location>
        <begin position="368"/>
        <end position="370"/>
    </location>
</feature>
<feature type="helix" evidence="4">
    <location>
        <begin position="373"/>
        <end position="383"/>
    </location>
</feature>
<feature type="strand" evidence="4">
    <location>
        <begin position="389"/>
        <end position="392"/>
    </location>
</feature>
<feature type="helix" evidence="4">
    <location>
        <begin position="396"/>
        <end position="404"/>
    </location>
</feature>
<feature type="strand" evidence="4">
    <location>
        <begin position="412"/>
        <end position="414"/>
    </location>
</feature>
<feature type="turn" evidence="2">
    <location>
        <begin position="422"/>
        <end position="424"/>
    </location>
</feature>
<feature type="helix" evidence="4">
    <location>
        <begin position="425"/>
        <end position="435"/>
    </location>
</feature>
<feature type="strand" evidence="4">
    <location>
        <begin position="441"/>
        <end position="446"/>
    </location>
</feature>
<feature type="helix" evidence="4">
    <location>
        <begin position="447"/>
        <end position="453"/>
    </location>
</feature>
<feature type="helix" evidence="4">
    <location>
        <begin position="454"/>
        <end position="456"/>
    </location>
</feature>
<feature type="helix" evidence="4">
    <location>
        <begin position="457"/>
        <end position="462"/>
    </location>
</feature>
<feature type="strand" evidence="4">
    <location>
        <begin position="468"/>
        <end position="473"/>
    </location>
</feature>
<feature type="helix" evidence="4">
    <location>
        <begin position="478"/>
        <end position="487"/>
    </location>
</feature>
<feature type="strand" evidence="4">
    <location>
        <begin position="494"/>
        <end position="496"/>
    </location>
</feature>
<feature type="helix" evidence="4">
    <location>
        <begin position="502"/>
        <end position="508"/>
    </location>
</feature>
<feature type="strand" evidence="4">
    <location>
        <begin position="512"/>
        <end position="516"/>
    </location>
</feature>
<feature type="helix" evidence="4">
    <location>
        <begin position="519"/>
        <end position="521"/>
    </location>
</feature>
<feature type="helix" evidence="4">
    <location>
        <begin position="522"/>
        <end position="532"/>
    </location>
</feature>
<feature type="turn" evidence="4">
    <location>
        <begin position="533"/>
        <end position="535"/>
    </location>
</feature>
<feature type="strand" evidence="4">
    <location>
        <begin position="538"/>
        <end position="543"/>
    </location>
</feature>
<feature type="turn" evidence="4">
    <location>
        <begin position="559"/>
        <end position="561"/>
    </location>
</feature>
<feature type="helix" evidence="4">
    <location>
        <begin position="564"/>
        <end position="574"/>
    </location>
</feature>
<feature type="helix" evidence="4">
    <location>
        <begin position="582"/>
        <end position="588"/>
    </location>
</feature>
<accession>P37063</accession>
<accession>F9ULE3</accession>
<keyword id="KW-0002">3D-structure</keyword>
<keyword id="KW-0274">FAD</keyword>
<keyword id="KW-0285">Flavoprotein</keyword>
<keyword id="KW-0460">Magnesium</keyword>
<keyword id="KW-0479">Metal-binding</keyword>
<keyword id="KW-0560">Oxidoreductase</keyword>
<keyword id="KW-1185">Reference proteome</keyword>
<keyword id="KW-0786">Thiamine pyrophosphate</keyword>
<reference key="1">
    <citation type="journal article" date="2003" name="Proc. Natl. Acad. Sci. U.S.A.">
        <title>Complete genome sequence of Lactobacillus plantarum WCFS1.</title>
        <authorList>
            <person name="Kleerebezem M."/>
            <person name="Boekhorst J."/>
            <person name="van Kranenburg R."/>
            <person name="Molenaar D."/>
            <person name="Kuipers O.P."/>
            <person name="Leer R."/>
            <person name="Tarchini R."/>
            <person name="Peters S.A."/>
            <person name="Sandbrink H.M."/>
            <person name="Fiers M.W.E.J."/>
            <person name="Stiekema W."/>
            <person name="Klein Lankhorst R.M."/>
            <person name="Bron P.A."/>
            <person name="Hoffer S.M."/>
            <person name="Nierop Groot M.N."/>
            <person name="Kerkhoven R."/>
            <person name="De Vries M."/>
            <person name="Ursing B."/>
            <person name="De Vos W.M."/>
            <person name="Siezen R.J."/>
        </authorList>
    </citation>
    <scope>NUCLEOTIDE SEQUENCE [LARGE SCALE GENOMIC DNA]</scope>
    <source>
        <strain>ATCC BAA-793 / NCIMB 8826 / WCFS1</strain>
    </source>
</reference>
<reference key="2">
    <citation type="journal article" date="2012" name="J. Bacteriol.">
        <title>Complete resequencing and reannotation of the Lactobacillus plantarum WCFS1 genome.</title>
        <authorList>
            <person name="Siezen R.J."/>
            <person name="Francke C."/>
            <person name="Renckens B."/>
            <person name="Boekhorst J."/>
            <person name="Wels M."/>
            <person name="Kleerebezem M."/>
            <person name="van Hijum S.A."/>
        </authorList>
    </citation>
    <scope>NUCLEOTIDE SEQUENCE [LARGE SCALE GENOMIC DNA]</scope>
    <scope>GENOME REANNOTATION</scope>
    <source>
        <strain>ATCC BAA-793 / NCIMB 8826 / WCFS1</strain>
    </source>
</reference>
<reference key="3">
    <citation type="journal article" date="1994" name="J. Mol. Biol.">
        <title>The refined structures of a stabilized mutant and of wild-type pyruvate oxidase from Lactobacillus plantarum.</title>
        <authorList>
            <person name="Muller Y.A."/>
            <person name="Schumacher G."/>
            <person name="Rudolph R."/>
            <person name="Schulz G.E."/>
        </authorList>
    </citation>
    <scope>X-RAY CRYSTALLOGRAPHY (2.5 AND 2.1 ANGSTROMS) OF WILD-TYPE AND MUTANT</scope>
</reference>
<reference key="4">
    <citation type="journal article" date="1993" name="Science">
        <title>Structure of the thiamine- and flavin-dependent enzyme pyruvate oxidase.</title>
        <authorList>
            <person name="Muller Y.A."/>
            <person name="Schulz G.E."/>
        </authorList>
    </citation>
    <scope>X-RAY CRYSTALLOGRAPHY (2.1 ANGSTROMS)</scope>
</reference>
<protein>
    <recommendedName>
        <fullName>Pyruvate oxidase</fullName>
        <ecNumber>1.2.3.3</ecNumber>
    </recommendedName>
    <alternativeName>
        <fullName>Pyruvic oxidase</fullName>
        <shortName>POX</shortName>
    </alternativeName>
</protein>
<evidence type="ECO:0000305" key="1"/>
<evidence type="ECO:0007829" key="2">
    <source>
        <dbReference type="PDB" id="1POW"/>
    </source>
</evidence>
<evidence type="ECO:0007829" key="3">
    <source>
        <dbReference type="PDB" id="1Y9D"/>
    </source>
</evidence>
<evidence type="ECO:0007829" key="4">
    <source>
        <dbReference type="PDB" id="6HAF"/>
    </source>
</evidence>
<dbReference type="EC" id="1.2.3.3"/>
<dbReference type="EMBL" id="AL935263">
    <property type="protein sequence ID" value="CCC80550.1"/>
    <property type="molecule type" value="Genomic_DNA"/>
</dbReference>
<dbReference type="RefSeq" id="YP_004891064.1">
    <property type="nucleotide sequence ID" value="NC_004567.2"/>
</dbReference>
<dbReference type="PDB" id="1POW">
    <property type="method" value="X-ray"/>
    <property type="resolution" value="2.50 A"/>
    <property type="chains" value="A/B=9-593"/>
</dbReference>
<dbReference type="PDB" id="1POX">
    <property type="method" value="X-ray"/>
    <property type="resolution" value="2.10 A"/>
    <property type="chains" value="A/B=9-593"/>
</dbReference>
<dbReference type="PDB" id="1Y9D">
    <property type="method" value="X-ray"/>
    <property type="resolution" value="2.20 A"/>
    <property type="chains" value="A/B/C/D=1-603"/>
</dbReference>
<dbReference type="PDB" id="2EZ4">
    <property type="method" value="X-ray"/>
    <property type="resolution" value="2.03 A"/>
    <property type="chains" value="A/B=1-603"/>
</dbReference>
<dbReference type="PDB" id="2EZ8">
    <property type="method" value="X-ray"/>
    <property type="resolution" value="1.96 A"/>
    <property type="chains" value="A/B=1-603"/>
</dbReference>
<dbReference type="PDB" id="2EZ9">
    <property type="method" value="X-ray"/>
    <property type="resolution" value="1.60 A"/>
    <property type="chains" value="A/B=1-603"/>
</dbReference>
<dbReference type="PDB" id="2EZT">
    <property type="method" value="X-ray"/>
    <property type="resolution" value="2.29 A"/>
    <property type="chains" value="A/B=1-603"/>
</dbReference>
<dbReference type="PDB" id="2EZU">
    <property type="method" value="X-ray"/>
    <property type="resolution" value="2.16 A"/>
    <property type="chains" value="A/B=1-603"/>
</dbReference>
<dbReference type="PDB" id="6HAF">
    <property type="method" value="X-ray"/>
    <property type="resolution" value="1.30 A"/>
    <property type="chains" value="A/B=1-603"/>
</dbReference>
<dbReference type="PDBsum" id="1POW"/>
<dbReference type="PDBsum" id="1POX"/>
<dbReference type="PDBsum" id="1Y9D"/>
<dbReference type="PDBsum" id="2EZ4"/>
<dbReference type="PDBsum" id="2EZ8"/>
<dbReference type="PDBsum" id="2EZ9"/>
<dbReference type="PDBsum" id="2EZT"/>
<dbReference type="PDBsum" id="2EZU"/>
<dbReference type="PDBsum" id="6HAF"/>
<dbReference type="SMR" id="P37063"/>
<dbReference type="STRING" id="220668.lp_3589"/>
<dbReference type="DrugBank" id="DB01987">
    <property type="generic name" value="Cocarboxylase"/>
</dbReference>
<dbReference type="DrugBank" id="DB03147">
    <property type="generic name" value="Flavin adenine dinucleotide"/>
</dbReference>
<dbReference type="EnsemblBacteria" id="CCC80550">
    <property type="protein sequence ID" value="CCC80550"/>
    <property type="gene ID" value="lp_3589"/>
</dbReference>
<dbReference type="KEGG" id="lpl:lp_3589"/>
<dbReference type="PATRIC" id="fig|220668.9.peg.2994"/>
<dbReference type="eggNOG" id="COG0028">
    <property type="taxonomic scope" value="Bacteria"/>
</dbReference>
<dbReference type="HOGENOM" id="CLU_013748_3_0_9"/>
<dbReference type="OrthoDB" id="4494979at2"/>
<dbReference type="PhylomeDB" id="P37063"/>
<dbReference type="BRENDA" id="1.2.3.3">
    <property type="organism ID" value="2849"/>
</dbReference>
<dbReference type="SABIO-RK" id="P37063"/>
<dbReference type="EvolutionaryTrace" id="P37063"/>
<dbReference type="Proteomes" id="UP000000432">
    <property type="component" value="Chromosome"/>
</dbReference>
<dbReference type="GO" id="GO:0000287">
    <property type="term" value="F:magnesium ion binding"/>
    <property type="evidence" value="ECO:0007669"/>
    <property type="project" value="InterPro"/>
</dbReference>
<dbReference type="GO" id="GO:0047112">
    <property type="term" value="F:pyruvate oxidase activity"/>
    <property type="evidence" value="ECO:0007669"/>
    <property type="project" value="UniProtKB-EC"/>
</dbReference>
<dbReference type="GO" id="GO:0030976">
    <property type="term" value="F:thiamine pyrophosphate binding"/>
    <property type="evidence" value="ECO:0007669"/>
    <property type="project" value="InterPro"/>
</dbReference>
<dbReference type="CDD" id="cd02014">
    <property type="entry name" value="TPP_POX"/>
    <property type="match status" value="1"/>
</dbReference>
<dbReference type="CDD" id="cd07039">
    <property type="entry name" value="TPP_PYR_POX"/>
    <property type="match status" value="1"/>
</dbReference>
<dbReference type="Gene3D" id="1.10.10.940">
    <property type="match status" value="1"/>
</dbReference>
<dbReference type="Gene3D" id="3.40.50.970">
    <property type="match status" value="2"/>
</dbReference>
<dbReference type="Gene3D" id="3.40.50.1220">
    <property type="entry name" value="TPP-binding domain"/>
    <property type="match status" value="1"/>
</dbReference>
<dbReference type="InterPro" id="IPR029035">
    <property type="entry name" value="DHS-like_NAD/FAD-binding_dom"/>
</dbReference>
<dbReference type="InterPro" id="IPR047211">
    <property type="entry name" value="POXB-like"/>
</dbReference>
<dbReference type="InterPro" id="IPR014092">
    <property type="entry name" value="Pyruvate_oxidase"/>
</dbReference>
<dbReference type="InterPro" id="IPR029061">
    <property type="entry name" value="THDP-binding"/>
</dbReference>
<dbReference type="InterPro" id="IPR012000">
    <property type="entry name" value="Thiamin_PyroP_enz_cen_dom"/>
</dbReference>
<dbReference type="InterPro" id="IPR012001">
    <property type="entry name" value="Thiamin_PyroP_enz_TPP-bd_dom"/>
</dbReference>
<dbReference type="InterPro" id="IPR000399">
    <property type="entry name" value="TPP-bd_CS"/>
</dbReference>
<dbReference type="InterPro" id="IPR011766">
    <property type="entry name" value="TPP_enzyme_TPP-bd"/>
</dbReference>
<dbReference type="InterPro" id="IPR047212">
    <property type="entry name" value="TPP_POXB-like"/>
</dbReference>
<dbReference type="InterPro" id="IPR047210">
    <property type="entry name" value="TPP_PYR_POXB-like"/>
</dbReference>
<dbReference type="NCBIfam" id="TIGR02720">
    <property type="entry name" value="pyruv_oxi_spxB"/>
    <property type="match status" value="1"/>
</dbReference>
<dbReference type="PANTHER" id="PTHR42981">
    <property type="entry name" value="PYRUVATE DEHYDROGENASE [UBIQUINONE]"/>
    <property type="match status" value="1"/>
</dbReference>
<dbReference type="PANTHER" id="PTHR42981:SF2">
    <property type="entry name" value="PYRUVATE DEHYDROGENASE [UBIQUINONE]"/>
    <property type="match status" value="1"/>
</dbReference>
<dbReference type="Pfam" id="PF02775">
    <property type="entry name" value="TPP_enzyme_C"/>
    <property type="match status" value="1"/>
</dbReference>
<dbReference type="Pfam" id="PF00205">
    <property type="entry name" value="TPP_enzyme_M"/>
    <property type="match status" value="1"/>
</dbReference>
<dbReference type="Pfam" id="PF02776">
    <property type="entry name" value="TPP_enzyme_N"/>
    <property type="match status" value="1"/>
</dbReference>
<dbReference type="SUPFAM" id="SSF52467">
    <property type="entry name" value="DHS-like NAD/FAD-binding domain"/>
    <property type="match status" value="1"/>
</dbReference>
<dbReference type="SUPFAM" id="SSF52518">
    <property type="entry name" value="Thiamin diphosphate-binding fold (THDP-binding)"/>
    <property type="match status" value="2"/>
</dbReference>
<dbReference type="PROSITE" id="PS00187">
    <property type="entry name" value="TPP_ENZYMES"/>
    <property type="match status" value="1"/>
</dbReference>
<proteinExistence type="evidence at protein level"/>
<gene>
    <name type="primary">pox5</name>
    <name type="ordered locus">lp_3589</name>
</gene>
<sequence>MVMKQTKQTNILAGAAVIKVLEAWGVDHLYGIPGGSINSIMDALSAERDRIHYIQVRHEEVGAMAAAADAKLTGKIGVCFGSAGPGGTHLMNGLYDAREDHVPVLALIGQFGTTGMNMDTFQEMNENPIYADVADYNVTAVNAATLPHVIDEAIRRAYAHQGVAVVQIPVDLPWQQIPAEDWYASANSYQTPLLPEPDVQAVTRLTQTLLAAERPLIYYGIGARKAGKELEQLSKTLKIPLMSTYPAKGIVADRYPAYLGSANRVAQKPANEALAQADVVLFVGNNYPFAEVSKAFKNTRYFLQIDIDPAKLGKRHKTDIAVLADAQKTLAAILAQVSERESTPWWQANLANVKNWRAYLASLEDKQEGPLQAYQVLRAVNKIAEPDAIYSIDVGDINLNANRHLKLTPSNRHITSNLFATMGVGIPGAIAAKLNYPERQVFNLAGDGGASMTMQDLATQVQYHLPVINVVFTNCQYGFIKDEQEDTNQNDFIGVEFNDIDFSKIADGVHMQAFRVNKIEQLPDVFEQAKAIAQHEPVLIDAVITGDRPLPAEKLRLDSATSSAADIEAFKQRYEAQDLQPLSTYLKQFGLDDLQHQIGQGGF</sequence>
<name>POXB_LACPL</name>